<evidence type="ECO:0000255" key="1">
    <source>
        <dbReference type="PROSITE-ProRule" id="PRU00805"/>
    </source>
</evidence>
<evidence type="ECO:0000269" key="2">
    <source>
    </source>
</evidence>
<evidence type="ECO:0000269" key="3">
    <source>
    </source>
</evidence>
<evidence type="ECO:0000303" key="4">
    <source>
    </source>
</evidence>
<evidence type="ECO:0000305" key="5"/>
<evidence type="ECO:0007829" key="6">
    <source>
        <dbReference type="PDB" id="6XJJ"/>
    </source>
</evidence>
<gene>
    <name evidence="4" type="primary">tropC</name>
    <name evidence="4" type="synonym">tsR5</name>
    <name type="ORF">TSTA_117800</name>
</gene>
<comment type="function">
    <text evidence="2 3">2-oxoglutarate-dependent dioxygenase; part of the gene cluster that mediates the biosynthesis of the tropolone class of fungal maleic anhydrides (PubMed:22508998, PubMed:24863423). The pathway begins with the synthesis of 3-methylorcinaldehyde by the non-reducing polyketide synthase (PKS) tropA (PubMed:22508998). 3-methylorcinaldehyde is the substrate for the FAD-dependent monooxygenase tropB to yield a dearomatized hydroxycyclohexadione (PubMed:22508998, PubMed:24863423). The 2-oxoglutarate-dependent dioxygenase tropC then performs the oxidative ring expansion to provide the first tropolone metabolite stipitaldehyde (PubMed:22508998, PubMed:24863423). Trop D converts stipitaldehyde into stipitacetal which is in turn converted to stipitalide by the short-chain dehydrogenase/reductase tropE (PubMed:24863423). The next steps involve tropF, tropG, tropH, tropI and tropJ to form successive tropolone maleic anhydrides including stipitaldehydic, stipitatonic and stipitatic acids (PubMed:24863423).</text>
</comment>
<comment type="cofactor">
    <cofactor evidence="1">
        <name>Fe(2+)</name>
        <dbReference type="ChEBI" id="CHEBI:29033"/>
    </cofactor>
    <text evidence="1">Binds 1 Fe(2+) ion per subunit.</text>
</comment>
<comment type="pathway">
    <text evidence="2">Secondary metabolite biosynthesis.</text>
</comment>
<comment type="disruption phenotype">
    <text evidence="2">Impairs the production of tropolones but leads to the accumulation of talaroenamine (PubMed:22508998).</text>
</comment>
<comment type="similarity">
    <text evidence="5">Belongs to the iron/ascorbate-dependent oxidoreductase family.</text>
</comment>
<reference key="1">
    <citation type="journal article" date="2012" name="Proc. Natl. Acad. Sci. U.S.A.">
        <title>Genetic, molecular, and biochemical basis of fungal tropolone biosynthesis.</title>
        <authorList>
            <person name="Davison J."/>
            <person name="al Fahad A."/>
            <person name="Cai M."/>
            <person name="Song Z."/>
            <person name="Yehia S.Y."/>
            <person name="Lazarus C.M."/>
            <person name="Bailey A.M."/>
            <person name="Simpson T.J."/>
            <person name="Cox R.J."/>
        </authorList>
    </citation>
    <scope>NUCLEOTIDE SEQUENCE [GENOMIC DNA]</scope>
    <scope>FUNCTION</scope>
    <scope>DISRUPTION PHENOTYPE</scope>
    <scope>CATALYTIC ACTIVITY</scope>
    <source>
        <strain>ATCC 10500 / CBS 375.48 / QM 6759 / NRRL 1006</strain>
    </source>
</reference>
<reference key="2">
    <citation type="journal article" date="2014" name="Angew. Chem. Int. Ed.">
        <title>The biosynthesis and catabolism of the maleic anhydride moiety of stipitatonic acid.</title>
        <authorList>
            <person name="al Fahad A."/>
            <person name="Abood A."/>
            <person name="Simpson T.J."/>
            <person name="Cox R.J."/>
        </authorList>
    </citation>
    <scope>NUCLEOTIDE SEQUENCE [GENOMIC DNA]</scope>
    <source>
        <strain>ATCC 10500 / CBS 375.48 / QM 6759 / NRRL 1006</strain>
    </source>
</reference>
<reference key="3">
    <citation type="journal article" date="2015" name="Genome Announc.">
        <title>Genome sequence of the AIDS-associated pathogen Penicillium marneffei (ATCC18224) and its near taxonomic relative Talaromyces stipitatus (ATCC10500).</title>
        <authorList>
            <person name="Nierman W.C."/>
            <person name="Fedorova-Abrams N.D."/>
            <person name="Andrianopoulos A."/>
        </authorList>
    </citation>
    <scope>NUCLEOTIDE SEQUENCE [LARGE SCALE GENOMIC DNA]</scope>
    <source>
        <strain>ATCC 10500 / CBS 375.48 / QM 6759 / NRRL 1006</strain>
    </source>
</reference>
<feature type="chain" id="PRO_0000437129" description="2-oxoglutarate-dependent dioxygenase tropC">
    <location>
        <begin position="1"/>
        <end position="325"/>
    </location>
</feature>
<feature type="domain" description="Fe2OG dioxygenase" evidence="1">
    <location>
        <begin position="185"/>
        <end position="287"/>
    </location>
</feature>
<feature type="binding site" evidence="1">
    <location>
        <position position="210"/>
    </location>
    <ligand>
        <name>Fe cation</name>
        <dbReference type="ChEBI" id="CHEBI:24875"/>
    </ligand>
</feature>
<feature type="binding site" evidence="1">
    <location>
        <position position="212"/>
    </location>
    <ligand>
        <name>Fe cation</name>
        <dbReference type="ChEBI" id="CHEBI:24875"/>
    </ligand>
</feature>
<feature type="binding site" evidence="1">
    <location>
        <position position="269"/>
    </location>
    <ligand>
        <name>Fe cation</name>
        <dbReference type="ChEBI" id="CHEBI:24875"/>
    </ligand>
</feature>
<feature type="binding site" evidence="1">
    <location>
        <position position="278"/>
    </location>
    <ligand>
        <name>2-oxoglutarate</name>
        <dbReference type="ChEBI" id="CHEBI:16810"/>
    </ligand>
</feature>
<feature type="strand" evidence="6">
    <location>
        <begin position="10"/>
        <end position="12"/>
    </location>
</feature>
<feature type="helix" evidence="6">
    <location>
        <begin position="14"/>
        <end position="17"/>
    </location>
</feature>
<feature type="strand" evidence="6">
    <location>
        <begin position="19"/>
        <end position="21"/>
    </location>
</feature>
<feature type="helix" evidence="6">
    <location>
        <begin position="23"/>
        <end position="39"/>
    </location>
</feature>
<feature type="strand" evidence="6">
    <location>
        <begin position="41"/>
        <end position="46"/>
    </location>
</feature>
<feature type="helix" evidence="6">
    <location>
        <begin position="52"/>
        <end position="66"/>
    </location>
</feature>
<feature type="helix" evidence="6">
    <location>
        <begin position="70"/>
        <end position="74"/>
    </location>
</feature>
<feature type="helix" evidence="6">
    <location>
        <begin position="78"/>
        <end position="80"/>
    </location>
</feature>
<feature type="strand" evidence="6">
    <location>
        <begin position="88"/>
        <end position="90"/>
    </location>
</feature>
<feature type="strand" evidence="6">
    <location>
        <begin position="106"/>
        <end position="111"/>
    </location>
</feature>
<feature type="turn" evidence="6">
    <location>
        <begin position="120"/>
        <end position="123"/>
    </location>
</feature>
<feature type="turn" evidence="6">
    <location>
        <begin position="138"/>
        <end position="141"/>
    </location>
</feature>
<feature type="helix" evidence="6">
    <location>
        <begin position="142"/>
        <end position="171"/>
    </location>
</feature>
<feature type="turn" evidence="6">
    <location>
        <begin position="175"/>
        <end position="178"/>
    </location>
</feature>
<feature type="helix" evidence="6">
    <location>
        <begin position="179"/>
        <end position="182"/>
    </location>
</feature>
<feature type="strand" evidence="6">
    <location>
        <begin position="189"/>
        <end position="194"/>
    </location>
</feature>
<feature type="strand" evidence="6">
    <location>
        <begin position="206"/>
        <end position="210"/>
    </location>
</feature>
<feature type="strand" evidence="6">
    <location>
        <begin position="214"/>
        <end position="220"/>
    </location>
</feature>
<feature type="strand" evidence="6">
    <location>
        <begin position="228"/>
        <end position="232"/>
    </location>
</feature>
<feature type="helix" evidence="6">
    <location>
        <begin position="233"/>
        <end position="235"/>
    </location>
</feature>
<feature type="strand" evidence="6">
    <location>
        <begin position="237"/>
        <end position="240"/>
    </location>
</feature>
<feature type="strand" evidence="6">
    <location>
        <begin position="248"/>
        <end position="252"/>
    </location>
</feature>
<feature type="helix" evidence="6">
    <location>
        <begin position="254"/>
        <end position="259"/>
    </location>
</feature>
<feature type="strand" evidence="6">
    <location>
        <begin position="262"/>
        <end position="264"/>
    </location>
</feature>
<feature type="strand" evidence="6">
    <location>
        <begin position="269"/>
        <end position="271"/>
    </location>
</feature>
<feature type="strand" evidence="6">
    <location>
        <begin position="278"/>
        <end position="286"/>
    </location>
</feature>
<keyword id="KW-0002">3D-structure</keyword>
<keyword id="KW-0223">Dioxygenase</keyword>
<keyword id="KW-0408">Iron</keyword>
<keyword id="KW-0479">Metal-binding</keyword>
<keyword id="KW-0560">Oxidoreductase</keyword>
<keyword id="KW-1185">Reference proteome</keyword>
<protein>
    <recommendedName>
        <fullName evidence="4">2-oxoglutarate-dependent dioxygenase tropC</fullName>
        <ecNumber evidence="2">1.14.-.-</ecNumber>
    </recommendedName>
    <alternativeName>
        <fullName evidence="4">Tropolone synthesis protein C</fullName>
    </alternativeName>
</protein>
<proteinExistence type="evidence at protein level"/>
<accession>B8M9K5</accession>
<dbReference type="EC" id="1.14.-.-" evidence="2"/>
<dbReference type="EMBL" id="BK008910">
    <property type="protein sequence ID" value="DAA64706.1"/>
    <property type="molecule type" value="Genomic_DNA"/>
</dbReference>
<dbReference type="EMBL" id="EQ962655">
    <property type="protein sequence ID" value="EED18007.1"/>
    <property type="molecule type" value="Genomic_DNA"/>
</dbReference>
<dbReference type="RefSeq" id="XP_002481999.1">
    <property type="nucleotide sequence ID" value="XM_002481954.1"/>
</dbReference>
<dbReference type="PDB" id="6XJJ">
    <property type="method" value="X-ray"/>
    <property type="resolution" value="2.70 A"/>
    <property type="chains" value="A=1-325"/>
</dbReference>
<dbReference type="PDBsum" id="6XJJ"/>
<dbReference type="SMR" id="B8M9K5"/>
<dbReference type="STRING" id="441959.B8M9K5"/>
<dbReference type="GeneID" id="8105838"/>
<dbReference type="VEuPathDB" id="FungiDB:TSTA_117800"/>
<dbReference type="eggNOG" id="KOG0143">
    <property type="taxonomic scope" value="Eukaryota"/>
</dbReference>
<dbReference type="HOGENOM" id="CLU_010119_6_3_1"/>
<dbReference type="InParanoid" id="B8M9K5"/>
<dbReference type="OrthoDB" id="288590at2759"/>
<dbReference type="PhylomeDB" id="B8M9K5"/>
<dbReference type="BioCyc" id="MetaCyc:MONOMER-19388"/>
<dbReference type="Proteomes" id="UP000001745">
    <property type="component" value="Unassembled WGS sequence"/>
</dbReference>
<dbReference type="GO" id="GO:0051213">
    <property type="term" value="F:dioxygenase activity"/>
    <property type="evidence" value="ECO:0007669"/>
    <property type="project" value="UniProtKB-KW"/>
</dbReference>
<dbReference type="GO" id="GO:0046872">
    <property type="term" value="F:metal ion binding"/>
    <property type="evidence" value="ECO:0007669"/>
    <property type="project" value="UniProtKB-KW"/>
</dbReference>
<dbReference type="GO" id="GO:0044283">
    <property type="term" value="P:small molecule biosynthetic process"/>
    <property type="evidence" value="ECO:0007669"/>
    <property type="project" value="UniProtKB-ARBA"/>
</dbReference>
<dbReference type="Gene3D" id="2.60.120.330">
    <property type="entry name" value="B-lactam Antibiotic, Isopenicillin N Synthase, Chain"/>
    <property type="match status" value="1"/>
</dbReference>
<dbReference type="InterPro" id="IPR026992">
    <property type="entry name" value="DIOX_N"/>
</dbReference>
<dbReference type="InterPro" id="IPR044861">
    <property type="entry name" value="IPNS-like_FE2OG_OXY"/>
</dbReference>
<dbReference type="InterPro" id="IPR027443">
    <property type="entry name" value="IPNS-like_sf"/>
</dbReference>
<dbReference type="InterPro" id="IPR050231">
    <property type="entry name" value="Iron_ascorbate_oxido_reductase"/>
</dbReference>
<dbReference type="InterPro" id="IPR005123">
    <property type="entry name" value="Oxoglu/Fe-dep_dioxygenase_dom"/>
</dbReference>
<dbReference type="PANTHER" id="PTHR47990">
    <property type="entry name" value="2-OXOGLUTARATE (2OG) AND FE(II)-DEPENDENT OXYGENASE SUPERFAMILY PROTEIN-RELATED"/>
    <property type="match status" value="1"/>
</dbReference>
<dbReference type="Pfam" id="PF03171">
    <property type="entry name" value="2OG-FeII_Oxy"/>
    <property type="match status" value="1"/>
</dbReference>
<dbReference type="Pfam" id="PF14226">
    <property type="entry name" value="DIOX_N"/>
    <property type="match status" value="1"/>
</dbReference>
<dbReference type="PRINTS" id="PR00682">
    <property type="entry name" value="IPNSYNTHASE"/>
</dbReference>
<dbReference type="SUPFAM" id="SSF51197">
    <property type="entry name" value="Clavaminate synthase-like"/>
    <property type="match status" value="1"/>
</dbReference>
<dbReference type="PROSITE" id="PS51471">
    <property type="entry name" value="FE2OG_OXY"/>
    <property type="match status" value="1"/>
</dbReference>
<sequence length="325" mass="36226">MSIGDEVIPTVDISAWLSSTASPESKNKVVEEVRSACNKYGFFNLVGHGIPAEAREKIFGCTKKFFDLPLEEKMKISVDKSLGKSFRGYEPSLIQTHQDGLLPDTKECFITGAEIPADHPDAGKFSTGPNLWPEGLSDKEFRQPVMEYRALMLDLVSTIVRILGQGIHKAFGHPSDVLNDILINPSIPMRLLHYAPQENPDPRQFGVGDHTDFGCVSILLQQKGTKGLEVWYPPKETWIPVPVIEDAFVINMGDTMHRWTGGYYRSARHRVYITGERRYSVAFFLNGNLNLKIKPLDGSGGEASVGEHINSRLAHTLGDNAKYLR</sequence>
<name>TROPC_TALSN</name>
<organism>
    <name type="scientific">Talaromyces stipitatus (strain ATCC 10500 / CBS 375.48 / QM 6759 / NRRL 1006)</name>
    <name type="common">Penicillium stipitatum</name>
    <dbReference type="NCBI Taxonomy" id="441959"/>
    <lineage>
        <taxon>Eukaryota</taxon>
        <taxon>Fungi</taxon>
        <taxon>Dikarya</taxon>
        <taxon>Ascomycota</taxon>
        <taxon>Pezizomycotina</taxon>
        <taxon>Eurotiomycetes</taxon>
        <taxon>Eurotiomycetidae</taxon>
        <taxon>Eurotiales</taxon>
        <taxon>Trichocomaceae</taxon>
        <taxon>Talaromyces</taxon>
        <taxon>Talaromyces sect. Talaromyces</taxon>
    </lineage>
</organism>